<dbReference type="EMBL" id="AF250389">
    <property type="protein sequence ID" value="AAK18637.1"/>
    <property type="molecule type" value="Genomic_DNA"/>
</dbReference>
<dbReference type="SMR" id="Q9AIN8"/>
<dbReference type="GO" id="GO:1990904">
    <property type="term" value="C:ribonucleoprotein complex"/>
    <property type="evidence" value="ECO:0007669"/>
    <property type="project" value="UniProtKB-KW"/>
</dbReference>
<dbReference type="GO" id="GO:0005840">
    <property type="term" value="C:ribosome"/>
    <property type="evidence" value="ECO:0007669"/>
    <property type="project" value="UniProtKB-KW"/>
</dbReference>
<dbReference type="GO" id="GO:0019843">
    <property type="term" value="F:rRNA binding"/>
    <property type="evidence" value="ECO:0007669"/>
    <property type="project" value="UniProtKB-KW"/>
</dbReference>
<dbReference type="GO" id="GO:0003735">
    <property type="term" value="F:structural constituent of ribosome"/>
    <property type="evidence" value="ECO:0007669"/>
    <property type="project" value="InterPro"/>
</dbReference>
<dbReference type="GO" id="GO:0006412">
    <property type="term" value="P:translation"/>
    <property type="evidence" value="ECO:0007669"/>
    <property type="project" value="InterPro"/>
</dbReference>
<dbReference type="Gene3D" id="4.10.960.10">
    <property type="entry name" value="Ribosomal protein L3, domain 3"/>
    <property type="match status" value="1"/>
</dbReference>
<dbReference type="InterPro" id="IPR044892">
    <property type="entry name" value="Ribosomal_L3_dom_3_arc_sf"/>
</dbReference>
<dbReference type="InterPro" id="IPR000597">
    <property type="entry name" value="Ribosomal_uL3"/>
</dbReference>
<dbReference type="InterPro" id="IPR019927">
    <property type="entry name" value="Ribosomal_uL3_bac/org-type"/>
</dbReference>
<dbReference type="InterPro" id="IPR009000">
    <property type="entry name" value="Transl_B-barrel_sf"/>
</dbReference>
<dbReference type="PANTHER" id="PTHR11229">
    <property type="entry name" value="50S RIBOSOMAL PROTEIN L3"/>
    <property type="match status" value="1"/>
</dbReference>
<dbReference type="PANTHER" id="PTHR11229:SF8">
    <property type="entry name" value="LARGE RIBOSOMAL SUBUNIT PROTEIN UL3M"/>
    <property type="match status" value="1"/>
</dbReference>
<dbReference type="Pfam" id="PF00297">
    <property type="entry name" value="Ribosomal_L3"/>
    <property type="match status" value="1"/>
</dbReference>
<dbReference type="SUPFAM" id="SSF50447">
    <property type="entry name" value="Translation proteins"/>
    <property type="match status" value="1"/>
</dbReference>
<protein>
    <recommendedName>
        <fullName evidence="2">Large ribosomal subunit protein uL3</fullName>
    </recommendedName>
    <alternativeName>
        <fullName>50S ribosomal protein L3</fullName>
    </alternativeName>
</protein>
<reference key="1">
    <citation type="journal article" date="2001" name="J. Bacteriol.">
        <title>Degenerative minimalism in the genome of a psyllid endosymbiont.</title>
        <authorList>
            <person name="Clark M.A."/>
            <person name="Baumann L."/>
            <person name="Thao M.L."/>
            <person name="Moran N.A."/>
            <person name="Baumann P."/>
        </authorList>
    </citation>
    <scope>NUCLEOTIDE SEQUENCE [GENOMIC DNA]</scope>
</reference>
<name>RL3_CARRU</name>
<evidence type="ECO:0000250" key="1"/>
<evidence type="ECO:0000305" key="2"/>
<feature type="chain" id="PRO_0000077082" description="Large ribosomal subunit protein uL3">
    <location>
        <begin position="1"/>
        <end position="136"/>
    </location>
</feature>
<feature type="modified residue" description="N5-methylglutamine" evidence="1">
    <location>
        <position position="83"/>
    </location>
</feature>
<accession>Q9AIN8</accession>
<proteinExistence type="inferred from homology"/>
<comment type="function">
    <text evidence="1">One of the primary rRNA binding proteins, it binds directly near the 3'-end of the 23S rRNA, where it nucleates assembly of the 50S subunit.</text>
</comment>
<comment type="subunit">
    <text evidence="1">Part of the 50S ribosomal subunit. Forms a cluster with proteins L14 and L19 (By similarity).</text>
</comment>
<comment type="PTM">
    <text evidence="1">Methylated by PrmB.</text>
</comment>
<comment type="similarity">
    <text evidence="2">Belongs to the universal ribosomal protein uL3 family.</text>
</comment>
<gene>
    <name type="primary">rplC</name>
    <name type="synonym">rpl3</name>
</gene>
<sequence length="136" mass="16086">MIFINKGTKHFFYKKKLYIFNVIKFSKFNKFYLNFIINKILLICYSKGKGFQGVVKRWNFKTKDKSHGNSLSYRTLGSTGQCQDPGRVFKKKKMPGRMGNKKFSLFVNIFFRKKNYFFLKKILPGVKNDILLGKIL</sequence>
<organism>
    <name type="scientific">Carsonella ruddii</name>
    <dbReference type="NCBI Taxonomy" id="114186"/>
    <lineage>
        <taxon>Bacteria</taxon>
        <taxon>Pseudomonadati</taxon>
        <taxon>Pseudomonadota</taxon>
        <taxon>Gammaproteobacteria</taxon>
        <taxon>Oceanospirillales</taxon>
        <taxon>Halomonadaceae</taxon>
        <taxon>Zymobacter group</taxon>
        <taxon>Candidatus Carsonella</taxon>
    </lineage>
</organism>
<keyword id="KW-0488">Methylation</keyword>
<keyword id="KW-0687">Ribonucleoprotein</keyword>
<keyword id="KW-0689">Ribosomal protein</keyword>
<keyword id="KW-0694">RNA-binding</keyword>
<keyword id="KW-0699">rRNA-binding</keyword>